<sequence>MKFDKHMLRKYFIMGSQNCHRDPREILKEAASAGITAFQYREKGKNSLTGTAKVELAKDLKAICHDFQIPFIINDDVDLAKQLDADGIHIGQDDQPVEVVRKQFPNKIIGLSISTNNELNQSPLDLVDYIGVGPIFDTNTKEDAKTAVGLEWIQSLKKQHPSLPLVAIGGINTTNAQEIIQAGADGVSFISAITETDHILQAVQRL</sequence>
<comment type="function">
    <text evidence="1">Condenses 4-methyl-5-(beta-hydroxyethyl)thiazole monophosphate (THZ-P) and 2-methyl-4-amino-5-hydroxymethyl pyrimidine pyrophosphate (HMP-PP) to form thiamine monophosphate (TMP).</text>
</comment>
<comment type="catalytic activity">
    <reaction evidence="1">
        <text>2-[(2R,5Z)-2-carboxy-4-methylthiazol-5(2H)-ylidene]ethyl phosphate + 4-amino-2-methyl-5-(diphosphooxymethyl)pyrimidine + 2 H(+) = thiamine phosphate + CO2 + diphosphate</text>
        <dbReference type="Rhea" id="RHEA:47844"/>
        <dbReference type="ChEBI" id="CHEBI:15378"/>
        <dbReference type="ChEBI" id="CHEBI:16526"/>
        <dbReference type="ChEBI" id="CHEBI:33019"/>
        <dbReference type="ChEBI" id="CHEBI:37575"/>
        <dbReference type="ChEBI" id="CHEBI:57841"/>
        <dbReference type="ChEBI" id="CHEBI:62899"/>
        <dbReference type="EC" id="2.5.1.3"/>
    </reaction>
</comment>
<comment type="catalytic activity">
    <reaction evidence="1">
        <text>2-(2-carboxy-4-methylthiazol-5-yl)ethyl phosphate + 4-amino-2-methyl-5-(diphosphooxymethyl)pyrimidine + 2 H(+) = thiamine phosphate + CO2 + diphosphate</text>
        <dbReference type="Rhea" id="RHEA:47848"/>
        <dbReference type="ChEBI" id="CHEBI:15378"/>
        <dbReference type="ChEBI" id="CHEBI:16526"/>
        <dbReference type="ChEBI" id="CHEBI:33019"/>
        <dbReference type="ChEBI" id="CHEBI:37575"/>
        <dbReference type="ChEBI" id="CHEBI:57841"/>
        <dbReference type="ChEBI" id="CHEBI:62890"/>
        <dbReference type="EC" id="2.5.1.3"/>
    </reaction>
</comment>
<comment type="catalytic activity">
    <reaction evidence="1">
        <text>4-methyl-5-(2-phosphooxyethyl)-thiazole + 4-amino-2-methyl-5-(diphosphooxymethyl)pyrimidine + H(+) = thiamine phosphate + diphosphate</text>
        <dbReference type="Rhea" id="RHEA:22328"/>
        <dbReference type="ChEBI" id="CHEBI:15378"/>
        <dbReference type="ChEBI" id="CHEBI:33019"/>
        <dbReference type="ChEBI" id="CHEBI:37575"/>
        <dbReference type="ChEBI" id="CHEBI:57841"/>
        <dbReference type="ChEBI" id="CHEBI:58296"/>
        <dbReference type="EC" id="2.5.1.3"/>
    </reaction>
</comment>
<comment type="cofactor">
    <cofactor evidence="1">
        <name>Mg(2+)</name>
        <dbReference type="ChEBI" id="CHEBI:18420"/>
    </cofactor>
    <text evidence="1">Binds 1 Mg(2+) ion per subunit.</text>
</comment>
<comment type="pathway">
    <text evidence="1">Cofactor biosynthesis; thiamine diphosphate biosynthesis; thiamine phosphate from 4-amino-2-methyl-5-diphosphomethylpyrimidine and 4-methyl-5-(2-phosphoethyl)-thiazole: step 1/1.</text>
</comment>
<comment type="similarity">
    <text evidence="1">Belongs to the thiamine-phosphate synthase family.</text>
</comment>
<proteinExistence type="inferred from homology"/>
<dbReference type="EC" id="2.5.1.3" evidence="1"/>
<dbReference type="EMBL" id="BA000028">
    <property type="protein sequence ID" value="BAC12428.1"/>
    <property type="molecule type" value="Genomic_DNA"/>
</dbReference>
<dbReference type="RefSeq" id="WP_011064878.1">
    <property type="nucleotide sequence ID" value="NC_004193.1"/>
</dbReference>
<dbReference type="SMR" id="Q8ESZ3"/>
<dbReference type="STRING" id="221109.gene:10732675"/>
<dbReference type="KEGG" id="oih:OB0472"/>
<dbReference type="eggNOG" id="COG0352">
    <property type="taxonomic scope" value="Bacteria"/>
</dbReference>
<dbReference type="HOGENOM" id="CLU_018272_3_2_9"/>
<dbReference type="OrthoDB" id="9812206at2"/>
<dbReference type="PhylomeDB" id="Q8ESZ3"/>
<dbReference type="UniPathway" id="UPA00060">
    <property type="reaction ID" value="UER00141"/>
</dbReference>
<dbReference type="Proteomes" id="UP000000822">
    <property type="component" value="Chromosome"/>
</dbReference>
<dbReference type="GO" id="GO:0005737">
    <property type="term" value="C:cytoplasm"/>
    <property type="evidence" value="ECO:0007669"/>
    <property type="project" value="TreeGrafter"/>
</dbReference>
<dbReference type="GO" id="GO:0000287">
    <property type="term" value="F:magnesium ion binding"/>
    <property type="evidence" value="ECO:0007669"/>
    <property type="project" value="UniProtKB-UniRule"/>
</dbReference>
<dbReference type="GO" id="GO:0004789">
    <property type="term" value="F:thiamine-phosphate diphosphorylase activity"/>
    <property type="evidence" value="ECO:0007669"/>
    <property type="project" value="UniProtKB-UniRule"/>
</dbReference>
<dbReference type="GO" id="GO:0009228">
    <property type="term" value="P:thiamine biosynthetic process"/>
    <property type="evidence" value="ECO:0007669"/>
    <property type="project" value="UniProtKB-KW"/>
</dbReference>
<dbReference type="GO" id="GO:0009229">
    <property type="term" value="P:thiamine diphosphate biosynthetic process"/>
    <property type="evidence" value="ECO:0007669"/>
    <property type="project" value="UniProtKB-UniRule"/>
</dbReference>
<dbReference type="CDD" id="cd00564">
    <property type="entry name" value="TMP_TenI"/>
    <property type="match status" value="1"/>
</dbReference>
<dbReference type="FunFam" id="3.20.20.70:FF:000096">
    <property type="entry name" value="Thiamine-phosphate synthase"/>
    <property type="match status" value="1"/>
</dbReference>
<dbReference type="Gene3D" id="3.20.20.70">
    <property type="entry name" value="Aldolase class I"/>
    <property type="match status" value="1"/>
</dbReference>
<dbReference type="HAMAP" id="MF_00097">
    <property type="entry name" value="TMP_synthase"/>
    <property type="match status" value="1"/>
</dbReference>
<dbReference type="InterPro" id="IPR013785">
    <property type="entry name" value="Aldolase_TIM"/>
</dbReference>
<dbReference type="InterPro" id="IPR036206">
    <property type="entry name" value="ThiamineP_synth_sf"/>
</dbReference>
<dbReference type="InterPro" id="IPR022998">
    <property type="entry name" value="ThiamineP_synth_TenI"/>
</dbReference>
<dbReference type="InterPro" id="IPR034291">
    <property type="entry name" value="TMP_synthase"/>
</dbReference>
<dbReference type="NCBIfam" id="TIGR00693">
    <property type="entry name" value="thiE"/>
    <property type="match status" value="1"/>
</dbReference>
<dbReference type="PANTHER" id="PTHR20857">
    <property type="entry name" value="THIAMINE-PHOSPHATE PYROPHOSPHORYLASE"/>
    <property type="match status" value="1"/>
</dbReference>
<dbReference type="PANTHER" id="PTHR20857:SF15">
    <property type="entry name" value="THIAMINE-PHOSPHATE SYNTHASE"/>
    <property type="match status" value="1"/>
</dbReference>
<dbReference type="Pfam" id="PF02581">
    <property type="entry name" value="TMP-TENI"/>
    <property type="match status" value="1"/>
</dbReference>
<dbReference type="SUPFAM" id="SSF51391">
    <property type="entry name" value="Thiamin phosphate synthase"/>
    <property type="match status" value="1"/>
</dbReference>
<evidence type="ECO:0000255" key="1">
    <source>
        <dbReference type="HAMAP-Rule" id="MF_00097"/>
    </source>
</evidence>
<accession>Q8ESZ3</accession>
<keyword id="KW-0460">Magnesium</keyword>
<keyword id="KW-0479">Metal-binding</keyword>
<keyword id="KW-1185">Reference proteome</keyword>
<keyword id="KW-0784">Thiamine biosynthesis</keyword>
<keyword id="KW-0808">Transferase</keyword>
<feature type="chain" id="PRO_0000157032" description="Thiamine-phosphate synthase">
    <location>
        <begin position="1"/>
        <end position="206"/>
    </location>
</feature>
<feature type="binding site" evidence="1">
    <location>
        <begin position="39"/>
        <end position="43"/>
    </location>
    <ligand>
        <name>4-amino-2-methyl-5-(diphosphooxymethyl)pyrimidine</name>
        <dbReference type="ChEBI" id="CHEBI:57841"/>
    </ligand>
</feature>
<feature type="binding site" evidence="1">
    <location>
        <position position="74"/>
    </location>
    <ligand>
        <name>4-amino-2-methyl-5-(diphosphooxymethyl)pyrimidine</name>
        <dbReference type="ChEBI" id="CHEBI:57841"/>
    </ligand>
</feature>
<feature type="binding site" evidence="1">
    <location>
        <position position="75"/>
    </location>
    <ligand>
        <name>Mg(2+)</name>
        <dbReference type="ChEBI" id="CHEBI:18420"/>
    </ligand>
</feature>
<feature type="binding site" evidence="1">
    <location>
        <position position="94"/>
    </location>
    <ligand>
        <name>Mg(2+)</name>
        <dbReference type="ChEBI" id="CHEBI:18420"/>
    </ligand>
</feature>
<feature type="binding site" evidence="1">
    <location>
        <position position="112"/>
    </location>
    <ligand>
        <name>4-amino-2-methyl-5-(diphosphooxymethyl)pyrimidine</name>
        <dbReference type="ChEBI" id="CHEBI:57841"/>
    </ligand>
</feature>
<feature type="binding site" evidence="1">
    <location>
        <begin position="138"/>
        <end position="140"/>
    </location>
    <ligand>
        <name>2-[(2R,5Z)-2-carboxy-4-methylthiazol-5(2H)-ylidene]ethyl phosphate</name>
        <dbReference type="ChEBI" id="CHEBI:62899"/>
    </ligand>
</feature>
<feature type="binding site" evidence="1">
    <location>
        <position position="141"/>
    </location>
    <ligand>
        <name>4-amino-2-methyl-5-(diphosphooxymethyl)pyrimidine</name>
        <dbReference type="ChEBI" id="CHEBI:57841"/>
    </ligand>
</feature>
<feature type="binding site" evidence="1">
    <location>
        <position position="170"/>
    </location>
    <ligand>
        <name>2-[(2R,5Z)-2-carboxy-4-methylthiazol-5(2H)-ylidene]ethyl phosphate</name>
        <dbReference type="ChEBI" id="CHEBI:62899"/>
    </ligand>
</feature>
<feature type="binding site" evidence="1">
    <location>
        <begin position="190"/>
        <end position="191"/>
    </location>
    <ligand>
        <name>2-[(2R,5Z)-2-carboxy-4-methylthiazol-5(2H)-ylidene]ethyl phosphate</name>
        <dbReference type="ChEBI" id="CHEBI:62899"/>
    </ligand>
</feature>
<name>THIE_OCEIH</name>
<organism>
    <name type="scientific">Oceanobacillus iheyensis (strain DSM 14371 / CIP 107618 / JCM 11309 / KCTC 3954 / HTE831)</name>
    <dbReference type="NCBI Taxonomy" id="221109"/>
    <lineage>
        <taxon>Bacteria</taxon>
        <taxon>Bacillati</taxon>
        <taxon>Bacillota</taxon>
        <taxon>Bacilli</taxon>
        <taxon>Bacillales</taxon>
        <taxon>Bacillaceae</taxon>
        <taxon>Oceanobacillus</taxon>
    </lineage>
</organism>
<gene>
    <name evidence="1" type="primary">thiE</name>
    <name type="ordered locus">OB0472</name>
</gene>
<protein>
    <recommendedName>
        <fullName evidence="1">Thiamine-phosphate synthase</fullName>
        <shortName evidence="1">TP synthase</shortName>
        <shortName evidence="1">TPS</shortName>
        <ecNumber evidence="1">2.5.1.3</ecNumber>
    </recommendedName>
    <alternativeName>
        <fullName evidence="1">Thiamine-phosphate pyrophosphorylase</fullName>
        <shortName evidence="1">TMP pyrophosphorylase</shortName>
        <shortName evidence="1">TMP-PPase</shortName>
    </alternativeName>
</protein>
<reference key="1">
    <citation type="journal article" date="2002" name="Nucleic Acids Res.">
        <title>Genome sequence of Oceanobacillus iheyensis isolated from the Iheya Ridge and its unexpected adaptive capabilities to extreme environments.</title>
        <authorList>
            <person name="Takami H."/>
            <person name="Takaki Y."/>
            <person name="Uchiyama I."/>
        </authorList>
    </citation>
    <scope>NUCLEOTIDE SEQUENCE [LARGE SCALE GENOMIC DNA]</scope>
    <source>
        <strain>DSM 14371 / CIP 107618 / JCM 11309 / KCTC 3954 / HTE831</strain>
    </source>
</reference>